<protein>
    <recommendedName>
        <fullName evidence="3">Peptide Ctri10261</fullName>
    </recommendedName>
</protein>
<organism>
    <name type="scientific">Chaerilus tricostatus</name>
    <name type="common">Scorpion</name>
    <dbReference type="NCBI Taxonomy" id="1055734"/>
    <lineage>
        <taxon>Eukaryota</taxon>
        <taxon>Metazoa</taxon>
        <taxon>Ecdysozoa</taxon>
        <taxon>Arthropoda</taxon>
        <taxon>Chelicerata</taxon>
        <taxon>Arachnida</taxon>
        <taxon>Scorpiones</taxon>
        <taxon>Chaerilida</taxon>
        <taxon>Chaeriloidea</taxon>
        <taxon>Chaerilidae</taxon>
        <taxon>Chaerilus</taxon>
    </lineage>
</organism>
<keyword id="KW-0027">Amidation</keyword>
<keyword id="KW-0929">Antimicrobial</keyword>
<keyword id="KW-0930">Antiviral protein</keyword>
<keyword id="KW-0964">Secreted</keyword>
<keyword id="KW-0732">Signal</keyword>
<proteinExistence type="inferred from homology"/>
<comment type="function">
    <text evidence="1">Antimicrobial peptide.</text>
</comment>
<comment type="subcellular location">
    <subcellularLocation>
        <location evidence="1">Secreted</location>
    </subcellularLocation>
</comment>
<comment type="tissue specificity">
    <text evidence="4">Expressed by the venom gland.</text>
</comment>
<comment type="miscellaneous">
    <text evidence="5">Shows a low ability to inhibit hepatitis C virus (HCV) infection in Huh7.5.1 cells.</text>
</comment>
<comment type="similarity">
    <text evidence="4">Belongs to the non-disulfide-bridged peptide (NDBP) superfamily. Short antimicrobial peptide (group 4) family.</text>
</comment>
<accession>P0DMF8</accession>
<name>NDB4U_CHATC</name>
<dbReference type="GO" id="GO:0005576">
    <property type="term" value="C:extracellular region"/>
    <property type="evidence" value="ECO:0007669"/>
    <property type="project" value="UniProtKB-SubCell"/>
</dbReference>
<dbReference type="GO" id="GO:0050688">
    <property type="term" value="P:regulation of defense response to virus"/>
    <property type="evidence" value="ECO:0007669"/>
    <property type="project" value="UniProtKB-KW"/>
</dbReference>
<evidence type="ECO:0000250" key="1"/>
<evidence type="ECO:0000255" key="2"/>
<evidence type="ECO:0000303" key="3">
    <source>
    </source>
</evidence>
<evidence type="ECO:0000305" key="4"/>
<evidence type="ECO:0000305" key="5">
    <source>
    </source>
</evidence>
<sequence>MKIPLILVTIAIILLMVPTESDAFDLGGLIKGVVDLFGRRSLKNRDYFDYMQDPSLSNADLRELEELLEDY</sequence>
<reference key="1">
    <citation type="journal article" date="2013" name="Biomaterials">
        <title>Design of histidine-rich peptides with enhanced bioavailability and inhibitory activity against hepatitis C virus.</title>
        <authorList>
            <person name="Hong W."/>
            <person name="Zhang R."/>
            <person name="Di Z."/>
            <person name="He Y."/>
            <person name="Zhao Z."/>
            <person name="Hu J."/>
            <person name="Wu Y."/>
            <person name="Li W."/>
            <person name="Cao Z."/>
        </authorList>
    </citation>
    <scope>NUCLEOTIDE SEQUENCE [MRNA]</scope>
    <scope>SYNTHESIS OF 24-37</scope>
    <source>
        <tissue>Venom gland</tissue>
    </source>
</reference>
<feature type="signal peptide" evidence="2">
    <location>
        <begin position="1"/>
        <end position="23"/>
    </location>
</feature>
<feature type="peptide" id="PRO_0000428707" description="Peptide Ctri10261">
    <location>
        <begin position="24"/>
        <end position="37"/>
    </location>
</feature>
<feature type="propeptide" id="PRO_0000428708" evidence="1">
    <location>
        <begin position="41"/>
        <end position="71"/>
    </location>
</feature>
<feature type="modified residue" description="Phenylalanine amide" evidence="1">
    <location>
        <position position="37"/>
    </location>
</feature>